<proteinExistence type="inferred from homology"/>
<sequence length="231" mass="24223">MAKLTKRQKAIAEKIEAGKAYNFEEAATLLASLPTAKFVESYDIAVNLGVDPRKSDQVVRSATVLPHGTGKTVRVAVFTQGPAAEAALAAGADRVGMDDLAAEMKGGDLNYDVVIASPDAMRVVGQLGQVLGPRGLMPNPKVGTVTPDVATAVKNAKAGQVRYRTDKNGIIHTSVGKVGFEAGKLKENVEALIADLKRIKPASSKGIYVKRVTLSTTMGPGLIIDQSSLNV</sequence>
<dbReference type="EMBL" id="CT573326">
    <property type="protein sequence ID" value="CAK13426.1"/>
    <property type="molecule type" value="Genomic_DNA"/>
</dbReference>
<dbReference type="RefSeq" id="WP_011531882.1">
    <property type="nucleotide sequence ID" value="NC_008027.1"/>
</dbReference>
<dbReference type="SMR" id="Q1IFX6"/>
<dbReference type="STRING" id="384676.PSEEN0479"/>
<dbReference type="GeneID" id="32803815"/>
<dbReference type="KEGG" id="pen:PSEEN0479"/>
<dbReference type="eggNOG" id="COG0081">
    <property type="taxonomic scope" value="Bacteria"/>
</dbReference>
<dbReference type="HOGENOM" id="CLU_062853_0_0_6"/>
<dbReference type="OrthoDB" id="9803740at2"/>
<dbReference type="Proteomes" id="UP000000658">
    <property type="component" value="Chromosome"/>
</dbReference>
<dbReference type="GO" id="GO:0022625">
    <property type="term" value="C:cytosolic large ribosomal subunit"/>
    <property type="evidence" value="ECO:0007669"/>
    <property type="project" value="TreeGrafter"/>
</dbReference>
<dbReference type="GO" id="GO:0019843">
    <property type="term" value="F:rRNA binding"/>
    <property type="evidence" value="ECO:0007669"/>
    <property type="project" value="UniProtKB-UniRule"/>
</dbReference>
<dbReference type="GO" id="GO:0003735">
    <property type="term" value="F:structural constituent of ribosome"/>
    <property type="evidence" value="ECO:0007669"/>
    <property type="project" value="InterPro"/>
</dbReference>
<dbReference type="GO" id="GO:0000049">
    <property type="term" value="F:tRNA binding"/>
    <property type="evidence" value="ECO:0007669"/>
    <property type="project" value="UniProtKB-KW"/>
</dbReference>
<dbReference type="GO" id="GO:0006417">
    <property type="term" value="P:regulation of translation"/>
    <property type="evidence" value="ECO:0007669"/>
    <property type="project" value="UniProtKB-KW"/>
</dbReference>
<dbReference type="GO" id="GO:0006412">
    <property type="term" value="P:translation"/>
    <property type="evidence" value="ECO:0007669"/>
    <property type="project" value="UniProtKB-UniRule"/>
</dbReference>
<dbReference type="CDD" id="cd00403">
    <property type="entry name" value="Ribosomal_L1"/>
    <property type="match status" value="1"/>
</dbReference>
<dbReference type="FunFam" id="3.40.50.790:FF:000001">
    <property type="entry name" value="50S ribosomal protein L1"/>
    <property type="match status" value="1"/>
</dbReference>
<dbReference type="Gene3D" id="3.30.190.20">
    <property type="match status" value="1"/>
</dbReference>
<dbReference type="Gene3D" id="3.40.50.790">
    <property type="match status" value="1"/>
</dbReference>
<dbReference type="HAMAP" id="MF_01318_B">
    <property type="entry name" value="Ribosomal_uL1_B"/>
    <property type="match status" value="1"/>
</dbReference>
<dbReference type="InterPro" id="IPR005878">
    <property type="entry name" value="Ribosom_uL1_bac-type"/>
</dbReference>
<dbReference type="InterPro" id="IPR002143">
    <property type="entry name" value="Ribosomal_uL1"/>
</dbReference>
<dbReference type="InterPro" id="IPR023674">
    <property type="entry name" value="Ribosomal_uL1-like"/>
</dbReference>
<dbReference type="InterPro" id="IPR028364">
    <property type="entry name" value="Ribosomal_uL1/biogenesis"/>
</dbReference>
<dbReference type="InterPro" id="IPR016095">
    <property type="entry name" value="Ribosomal_uL1_3-a/b-sand"/>
</dbReference>
<dbReference type="InterPro" id="IPR023673">
    <property type="entry name" value="Ribosomal_uL1_CS"/>
</dbReference>
<dbReference type="NCBIfam" id="TIGR01169">
    <property type="entry name" value="rplA_bact"/>
    <property type="match status" value="1"/>
</dbReference>
<dbReference type="PANTHER" id="PTHR36427">
    <property type="entry name" value="54S RIBOSOMAL PROTEIN L1, MITOCHONDRIAL"/>
    <property type="match status" value="1"/>
</dbReference>
<dbReference type="PANTHER" id="PTHR36427:SF3">
    <property type="entry name" value="LARGE RIBOSOMAL SUBUNIT PROTEIN UL1M"/>
    <property type="match status" value="1"/>
</dbReference>
<dbReference type="Pfam" id="PF00687">
    <property type="entry name" value="Ribosomal_L1"/>
    <property type="match status" value="1"/>
</dbReference>
<dbReference type="PIRSF" id="PIRSF002155">
    <property type="entry name" value="Ribosomal_L1"/>
    <property type="match status" value="1"/>
</dbReference>
<dbReference type="SUPFAM" id="SSF56808">
    <property type="entry name" value="Ribosomal protein L1"/>
    <property type="match status" value="1"/>
</dbReference>
<dbReference type="PROSITE" id="PS01199">
    <property type="entry name" value="RIBOSOMAL_L1"/>
    <property type="match status" value="1"/>
</dbReference>
<name>RL1_PSEE4</name>
<reference key="1">
    <citation type="journal article" date="2006" name="Nat. Biotechnol.">
        <title>Complete genome sequence of the entomopathogenic and metabolically versatile soil bacterium Pseudomonas entomophila.</title>
        <authorList>
            <person name="Vodovar N."/>
            <person name="Vallenet D."/>
            <person name="Cruveiller S."/>
            <person name="Rouy Z."/>
            <person name="Barbe V."/>
            <person name="Acosta C."/>
            <person name="Cattolico L."/>
            <person name="Jubin C."/>
            <person name="Lajus A."/>
            <person name="Segurens B."/>
            <person name="Vacherie B."/>
            <person name="Wincker P."/>
            <person name="Weissenbach J."/>
            <person name="Lemaitre B."/>
            <person name="Medigue C."/>
            <person name="Boccard F."/>
        </authorList>
    </citation>
    <scope>NUCLEOTIDE SEQUENCE [LARGE SCALE GENOMIC DNA]</scope>
    <source>
        <strain>L48</strain>
    </source>
</reference>
<evidence type="ECO:0000255" key="1">
    <source>
        <dbReference type="HAMAP-Rule" id="MF_01318"/>
    </source>
</evidence>
<evidence type="ECO:0000305" key="2"/>
<gene>
    <name evidence="1" type="primary">rplA</name>
    <name type="ordered locus">PSEEN0479</name>
</gene>
<keyword id="KW-0678">Repressor</keyword>
<keyword id="KW-0687">Ribonucleoprotein</keyword>
<keyword id="KW-0689">Ribosomal protein</keyword>
<keyword id="KW-0694">RNA-binding</keyword>
<keyword id="KW-0699">rRNA-binding</keyword>
<keyword id="KW-0810">Translation regulation</keyword>
<keyword id="KW-0820">tRNA-binding</keyword>
<accession>Q1IFX6</accession>
<feature type="chain" id="PRO_0000308077" description="Large ribosomal subunit protein uL1">
    <location>
        <begin position="1"/>
        <end position="231"/>
    </location>
</feature>
<protein>
    <recommendedName>
        <fullName evidence="1">Large ribosomal subunit protein uL1</fullName>
    </recommendedName>
    <alternativeName>
        <fullName evidence="2">50S ribosomal protein L1</fullName>
    </alternativeName>
</protein>
<comment type="function">
    <text evidence="1">Binds directly to 23S rRNA. The L1 stalk is quite mobile in the ribosome, and is involved in E site tRNA release.</text>
</comment>
<comment type="function">
    <text evidence="1">Protein L1 is also a translational repressor protein, it controls the translation of the L11 operon by binding to its mRNA.</text>
</comment>
<comment type="subunit">
    <text evidence="1">Part of the 50S ribosomal subunit.</text>
</comment>
<comment type="similarity">
    <text evidence="1">Belongs to the universal ribosomal protein uL1 family.</text>
</comment>
<organism>
    <name type="scientific">Pseudomonas entomophila (strain L48)</name>
    <dbReference type="NCBI Taxonomy" id="384676"/>
    <lineage>
        <taxon>Bacteria</taxon>
        <taxon>Pseudomonadati</taxon>
        <taxon>Pseudomonadota</taxon>
        <taxon>Gammaproteobacteria</taxon>
        <taxon>Pseudomonadales</taxon>
        <taxon>Pseudomonadaceae</taxon>
        <taxon>Pseudomonas</taxon>
    </lineage>
</organism>